<reference key="1">
    <citation type="journal article" date="2011" name="J. Bacteriol.">
        <title>Genome sequence of Thermotoga sp. strain RQ2, a hyperthermophilic bacterium isolated from a geothermally heated region of the seafloor near Ribeira Quente, the Azores.</title>
        <authorList>
            <person name="Swithers K.S."/>
            <person name="DiPippo J.L."/>
            <person name="Bruce D.C."/>
            <person name="Detter C."/>
            <person name="Tapia R."/>
            <person name="Han S."/>
            <person name="Saunders E."/>
            <person name="Goodwin L.A."/>
            <person name="Han J."/>
            <person name="Woyke T."/>
            <person name="Pitluck S."/>
            <person name="Pennacchio L."/>
            <person name="Nolan M."/>
            <person name="Mikhailova N."/>
            <person name="Lykidis A."/>
            <person name="Land M.L."/>
            <person name="Brettin T."/>
            <person name="Stetter K.O."/>
            <person name="Nelson K.E."/>
            <person name="Gogarten J.P."/>
            <person name="Noll K.M."/>
        </authorList>
    </citation>
    <scope>NUCLEOTIDE SEQUENCE [LARGE SCALE GENOMIC DNA]</scope>
    <source>
        <strain>RQ2</strain>
    </source>
</reference>
<name>HIS4_THESQ</name>
<sequence>MLVVPAIDLFRGKVARMIKGRKENTIFYEKDPVELVEKLIEEGFTLIHVVDLSNAIENSGENLPVLEKLSEFAEHIQIGGGIRSLDYAEKLRKLGYRRQIVSSKVLEDPSFLKSLREIDVEPVFSLDTRGGRVAFKGWLAEEEIDPVSLLKRLKEYGLEEIVHTEIEKDGTLQEHDFSLTKKIAIEAEVKVLAAGGISSENSLKTAQKVHTETNGLLKGVIVGRAFLEGILTVEVMKRYAR</sequence>
<accession>B1L872</accession>
<protein>
    <recommendedName>
        <fullName evidence="1">1-(5-phosphoribosyl)-5-[(5-phosphoribosylamino)methylideneamino] imidazole-4-carboxamide isomerase</fullName>
        <ecNumber evidence="1">5.3.1.16</ecNumber>
    </recommendedName>
    <alternativeName>
        <fullName evidence="1">Phosphoribosylformimino-5-aminoimidazole carboxamide ribotide isomerase</fullName>
    </alternativeName>
</protein>
<comment type="catalytic activity">
    <reaction evidence="1">
        <text>1-(5-phospho-beta-D-ribosyl)-5-[(5-phospho-beta-D-ribosylamino)methylideneamino]imidazole-4-carboxamide = 5-[(5-phospho-1-deoxy-D-ribulos-1-ylimino)methylamino]-1-(5-phospho-beta-D-ribosyl)imidazole-4-carboxamide</text>
        <dbReference type="Rhea" id="RHEA:15469"/>
        <dbReference type="ChEBI" id="CHEBI:58435"/>
        <dbReference type="ChEBI" id="CHEBI:58525"/>
        <dbReference type="EC" id="5.3.1.16"/>
    </reaction>
</comment>
<comment type="pathway">
    <text evidence="1">Amino-acid biosynthesis; L-histidine biosynthesis; L-histidine from 5-phospho-alpha-D-ribose 1-diphosphate: step 4/9.</text>
</comment>
<comment type="subcellular location">
    <subcellularLocation>
        <location evidence="1">Cytoplasm</location>
    </subcellularLocation>
</comment>
<comment type="similarity">
    <text evidence="1">Belongs to the HisA/HisF family.</text>
</comment>
<organism>
    <name type="scientific">Thermotoga sp. (strain RQ2)</name>
    <dbReference type="NCBI Taxonomy" id="126740"/>
    <lineage>
        <taxon>Bacteria</taxon>
        <taxon>Thermotogati</taxon>
        <taxon>Thermotogota</taxon>
        <taxon>Thermotogae</taxon>
        <taxon>Thermotogales</taxon>
        <taxon>Thermotogaceae</taxon>
        <taxon>Thermotoga</taxon>
    </lineage>
</organism>
<evidence type="ECO:0000255" key="1">
    <source>
        <dbReference type="HAMAP-Rule" id="MF_01014"/>
    </source>
</evidence>
<keyword id="KW-0028">Amino-acid biosynthesis</keyword>
<keyword id="KW-0963">Cytoplasm</keyword>
<keyword id="KW-0368">Histidine biosynthesis</keyword>
<keyword id="KW-0413">Isomerase</keyword>
<gene>
    <name evidence="1" type="primary">hisA</name>
    <name type="ordered locus">TRQ2_1771</name>
</gene>
<dbReference type="EC" id="5.3.1.16" evidence="1"/>
<dbReference type="EMBL" id="CP000969">
    <property type="protein sequence ID" value="ACB10102.1"/>
    <property type="molecule type" value="Genomic_DNA"/>
</dbReference>
<dbReference type="RefSeq" id="WP_004080485.1">
    <property type="nucleotide sequence ID" value="NC_010483.1"/>
</dbReference>
<dbReference type="SMR" id="B1L872"/>
<dbReference type="KEGG" id="trq:TRQ2_1771"/>
<dbReference type="HOGENOM" id="CLU_048577_1_2_0"/>
<dbReference type="UniPathway" id="UPA00031">
    <property type="reaction ID" value="UER00009"/>
</dbReference>
<dbReference type="Proteomes" id="UP000001687">
    <property type="component" value="Chromosome"/>
</dbReference>
<dbReference type="GO" id="GO:0005737">
    <property type="term" value="C:cytoplasm"/>
    <property type="evidence" value="ECO:0007669"/>
    <property type="project" value="UniProtKB-SubCell"/>
</dbReference>
<dbReference type="GO" id="GO:0003949">
    <property type="term" value="F:1-(5-phosphoribosyl)-5-[(5-phosphoribosylamino)methylideneamino]imidazole-4-carboxamide isomerase activity"/>
    <property type="evidence" value="ECO:0007669"/>
    <property type="project" value="UniProtKB-UniRule"/>
</dbReference>
<dbReference type="GO" id="GO:0000105">
    <property type="term" value="P:L-histidine biosynthetic process"/>
    <property type="evidence" value="ECO:0007669"/>
    <property type="project" value="UniProtKB-UniRule"/>
</dbReference>
<dbReference type="GO" id="GO:0000162">
    <property type="term" value="P:L-tryptophan biosynthetic process"/>
    <property type="evidence" value="ECO:0007669"/>
    <property type="project" value="TreeGrafter"/>
</dbReference>
<dbReference type="CDD" id="cd04732">
    <property type="entry name" value="HisA"/>
    <property type="match status" value="1"/>
</dbReference>
<dbReference type="FunFam" id="3.20.20.70:FF:000412">
    <property type="entry name" value="1-(5-phosphoribosyl)-5-[(5-phosphoribosylamino)methylideneamino] imidazole-4-carboxamide isomerase"/>
    <property type="match status" value="1"/>
</dbReference>
<dbReference type="Gene3D" id="3.20.20.70">
    <property type="entry name" value="Aldolase class I"/>
    <property type="match status" value="1"/>
</dbReference>
<dbReference type="HAMAP" id="MF_01014">
    <property type="entry name" value="HisA"/>
    <property type="match status" value="1"/>
</dbReference>
<dbReference type="InterPro" id="IPR013785">
    <property type="entry name" value="Aldolase_TIM"/>
</dbReference>
<dbReference type="InterPro" id="IPR006062">
    <property type="entry name" value="His_biosynth"/>
</dbReference>
<dbReference type="InterPro" id="IPR006063">
    <property type="entry name" value="HisA_bact_arch"/>
</dbReference>
<dbReference type="InterPro" id="IPR044524">
    <property type="entry name" value="Isoase_HisA-like"/>
</dbReference>
<dbReference type="InterPro" id="IPR023016">
    <property type="entry name" value="Isoase_HisA-like_bact"/>
</dbReference>
<dbReference type="InterPro" id="IPR011060">
    <property type="entry name" value="RibuloseP-bd_barrel"/>
</dbReference>
<dbReference type="NCBIfam" id="TIGR00007">
    <property type="entry name" value="1-(5-phosphoribosyl)-5-[(5-phosphoribosylamino)methylideneamino]imidazole-4-carboxamide isomerase"/>
    <property type="match status" value="1"/>
</dbReference>
<dbReference type="NCBIfam" id="NF010712">
    <property type="entry name" value="PRK14114.1"/>
    <property type="match status" value="1"/>
</dbReference>
<dbReference type="PANTHER" id="PTHR43090">
    <property type="entry name" value="1-(5-PHOSPHORIBOSYL)-5-[(5-PHOSPHORIBOSYLAMINO)METHYLIDENEAMINO] IMIDAZOLE-4-CARBOXAMIDE ISOMERASE"/>
    <property type="match status" value="1"/>
</dbReference>
<dbReference type="PANTHER" id="PTHR43090:SF2">
    <property type="entry name" value="1-(5-PHOSPHORIBOSYL)-5-[(5-PHOSPHORIBOSYLAMINO)METHYLIDENEAMINO] IMIDAZOLE-4-CARBOXAMIDE ISOMERASE"/>
    <property type="match status" value="1"/>
</dbReference>
<dbReference type="Pfam" id="PF00977">
    <property type="entry name" value="His_biosynth"/>
    <property type="match status" value="1"/>
</dbReference>
<dbReference type="SUPFAM" id="SSF51366">
    <property type="entry name" value="Ribulose-phoshate binding barrel"/>
    <property type="match status" value="1"/>
</dbReference>
<feature type="chain" id="PRO_1000190567" description="1-(5-phosphoribosyl)-5-[(5-phosphoribosylamino)methylideneamino] imidazole-4-carboxamide isomerase">
    <location>
        <begin position="1"/>
        <end position="241"/>
    </location>
</feature>
<feature type="active site" description="Proton acceptor" evidence="1">
    <location>
        <position position="8"/>
    </location>
</feature>
<feature type="active site" description="Proton donor" evidence="1">
    <location>
        <position position="127"/>
    </location>
</feature>
<proteinExistence type="inferred from homology"/>